<accession>A9WQ58</accession>
<feature type="chain" id="PRO_1000114788" description="Imidazole glycerol phosphate synthase subunit HisH">
    <location>
        <begin position="1"/>
        <end position="219"/>
    </location>
</feature>
<feature type="domain" description="Glutamine amidotransferase type-1" evidence="1">
    <location>
        <begin position="4"/>
        <end position="216"/>
    </location>
</feature>
<feature type="active site" description="Nucleophile" evidence="1">
    <location>
        <position position="82"/>
    </location>
</feature>
<feature type="active site" evidence="1">
    <location>
        <position position="191"/>
    </location>
</feature>
<feature type="active site" evidence="1">
    <location>
        <position position="193"/>
    </location>
</feature>
<dbReference type="EC" id="4.3.2.10" evidence="1"/>
<dbReference type="EC" id="3.5.1.2" evidence="1"/>
<dbReference type="EMBL" id="CP000910">
    <property type="protein sequence ID" value="ABY22484.1"/>
    <property type="molecule type" value="Genomic_DNA"/>
</dbReference>
<dbReference type="SMR" id="A9WQ58"/>
<dbReference type="STRING" id="288705.RSal33209_0737"/>
<dbReference type="KEGG" id="rsa:RSal33209_0737"/>
<dbReference type="eggNOG" id="COG0118">
    <property type="taxonomic scope" value="Bacteria"/>
</dbReference>
<dbReference type="HOGENOM" id="CLU_071837_1_0_11"/>
<dbReference type="UniPathway" id="UPA00031">
    <property type="reaction ID" value="UER00010"/>
</dbReference>
<dbReference type="Proteomes" id="UP000002007">
    <property type="component" value="Chromosome"/>
</dbReference>
<dbReference type="GO" id="GO:0005737">
    <property type="term" value="C:cytoplasm"/>
    <property type="evidence" value="ECO:0007669"/>
    <property type="project" value="UniProtKB-SubCell"/>
</dbReference>
<dbReference type="GO" id="GO:0004359">
    <property type="term" value="F:glutaminase activity"/>
    <property type="evidence" value="ECO:0007669"/>
    <property type="project" value="UniProtKB-EC"/>
</dbReference>
<dbReference type="GO" id="GO:0000107">
    <property type="term" value="F:imidazoleglycerol-phosphate synthase activity"/>
    <property type="evidence" value="ECO:0007669"/>
    <property type="project" value="UniProtKB-UniRule"/>
</dbReference>
<dbReference type="GO" id="GO:0016829">
    <property type="term" value="F:lyase activity"/>
    <property type="evidence" value="ECO:0007669"/>
    <property type="project" value="UniProtKB-KW"/>
</dbReference>
<dbReference type="GO" id="GO:0000105">
    <property type="term" value="P:L-histidine biosynthetic process"/>
    <property type="evidence" value="ECO:0007669"/>
    <property type="project" value="UniProtKB-UniRule"/>
</dbReference>
<dbReference type="CDD" id="cd01748">
    <property type="entry name" value="GATase1_IGP_Synthase"/>
    <property type="match status" value="1"/>
</dbReference>
<dbReference type="Gene3D" id="3.40.50.880">
    <property type="match status" value="1"/>
</dbReference>
<dbReference type="HAMAP" id="MF_00278">
    <property type="entry name" value="HisH"/>
    <property type="match status" value="1"/>
</dbReference>
<dbReference type="InterPro" id="IPR029062">
    <property type="entry name" value="Class_I_gatase-like"/>
</dbReference>
<dbReference type="InterPro" id="IPR017926">
    <property type="entry name" value="GATASE"/>
</dbReference>
<dbReference type="InterPro" id="IPR010139">
    <property type="entry name" value="Imidazole-glycPsynth_HisH"/>
</dbReference>
<dbReference type="NCBIfam" id="TIGR01855">
    <property type="entry name" value="IMP_synth_hisH"/>
    <property type="match status" value="1"/>
</dbReference>
<dbReference type="PANTHER" id="PTHR42701">
    <property type="entry name" value="IMIDAZOLE GLYCEROL PHOSPHATE SYNTHASE SUBUNIT HISH"/>
    <property type="match status" value="1"/>
</dbReference>
<dbReference type="PANTHER" id="PTHR42701:SF1">
    <property type="entry name" value="IMIDAZOLE GLYCEROL PHOSPHATE SYNTHASE SUBUNIT HISH"/>
    <property type="match status" value="1"/>
</dbReference>
<dbReference type="Pfam" id="PF00117">
    <property type="entry name" value="GATase"/>
    <property type="match status" value="1"/>
</dbReference>
<dbReference type="PIRSF" id="PIRSF000495">
    <property type="entry name" value="Amidotransf_hisH"/>
    <property type="match status" value="1"/>
</dbReference>
<dbReference type="SUPFAM" id="SSF52317">
    <property type="entry name" value="Class I glutamine amidotransferase-like"/>
    <property type="match status" value="1"/>
</dbReference>
<dbReference type="PROSITE" id="PS51273">
    <property type="entry name" value="GATASE_TYPE_1"/>
    <property type="match status" value="1"/>
</dbReference>
<evidence type="ECO:0000255" key="1">
    <source>
        <dbReference type="HAMAP-Rule" id="MF_00278"/>
    </source>
</evidence>
<organism>
    <name type="scientific">Renibacterium salmoninarum (strain ATCC 33209 / DSM 20767 / JCM 11484 / NBRC 15589 / NCIMB 2235)</name>
    <dbReference type="NCBI Taxonomy" id="288705"/>
    <lineage>
        <taxon>Bacteria</taxon>
        <taxon>Bacillati</taxon>
        <taxon>Actinomycetota</taxon>
        <taxon>Actinomycetes</taxon>
        <taxon>Micrococcales</taxon>
        <taxon>Micrococcaceae</taxon>
        <taxon>Renibacterium</taxon>
    </lineage>
</organism>
<keyword id="KW-0028">Amino-acid biosynthesis</keyword>
<keyword id="KW-0963">Cytoplasm</keyword>
<keyword id="KW-0315">Glutamine amidotransferase</keyword>
<keyword id="KW-0368">Histidine biosynthesis</keyword>
<keyword id="KW-0378">Hydrolase</keyword>
<keyword id="KW-0456">Lyase</keyword>
<keyword id="KW-1185">Reference proteome</keyword>
<name>HIS5_RENSM</name>
<gene>
    <name evidence="1" type="primary">hisH</name>
    <name type="ordered locus">RSal33209_0737</name>
</gene>
<protein>
    <recommendedName>
        <fullName evidence="1">Imidazole glycerol phosphate synthase subunit HisH</fullName>
        <ecNumber evidence="1">4.3.2.10</ecNumber>
    </recommendedName>
    <alternativeName>
        <fullName evidence="1">IGP synthase glutaminase subunit</fullName>
        <ecNumber evidence="1">3.5.1.2</ecNumber>
    </alternativeName>
    <alternativeName>
        <fullName evidence="1">IGP synthase subunit HisH</fullName>
    </alternativeName>
    <alternativeName>
        <fullName evidence="1">ImGP synthase subunit HisH</fullName>
        <shortName evidence="1">IGPS subunit HisH</shortName>
    </alternativeName>
</protein>
<reference key="1">
    <citation type="journal article" date="2008" name="J. Bacteriol.">
        <title>Genome sequence of the fish pathogen Renibacterium salmoninarum suggests reductive evolution away from an environmental Arthrobacter ancestor.</title>
        <authorList>
            <person name="Wiens G.D."/>
            <person name="Rockey D.D."/>
            <person name="Wu Z."/>
            <person name="Chang J."/>
            <person name="Levy R."/>
            <person name="Crane S."/>
            <person name="Chen D.S."/>
            <person name="Capri G.R."/>
            <person name="Burnett J.R."/>
            <person name="Sudheesh P.S."/>
            <person name="Schipma M.J."/>
            <person name="Burd H."/>
            <person name="Bhattacharyya A."/>
            <person name="Rhodes L.D."/>
            <person name="Kaul R."/>
            <person name="Strom M.S."/>
        </authorList>
    </citation>
    <scope>NUCLEOTIDE SEQUENCE [LARGE SCALE GENOMIC DNA]</scope>
    <source>
        <strain>ATCC 33209 / DSM 20767 / JCM 11484 / NBRC 15589 / NCIMB 2235</strain>
    </source>
</reference>
<comment type="function">
    <text evidence="1">IGPS catalyzes the conversion of PRFAR and glutamine to IGP, AICAR and glutamate. The HisH subunit catalyzes the hydrolysis of glutamine to glutamate and ammonia as part of the synthesis of IGP and AICAR. The resulting ammonia molecule is channeled to the active site of HisF.</text>
</comment>
<comment type="catalytic activity">
    <reaction evidence="1">
        <text>5-[(5-phospho-1-deoxy-D-ribulos-1-ylimino)methylamino]-1-(5-phospho-beta-D-ribosyl)imidazole-4-carboxamide + L-glutamine = D-erythro-1-(imidazol-4-yl)glycerol 3-phosphate + 5-amino-1-(5-phospho-beta-D-ribosyl)imidazole-4-carboxamide + L-glutamate + H(+)</text>
        <dbReference type="Rhea" id="RHEA:24793"/>
        <dbReference type="ChEBI" id="CHEBI:15378"/>
        <dbReference type="ChEBI" id="CHEBI:29985"/>
        <dbReference type="ChEBI" id="CHEBI:58278"/>
        <dbReference type="ChEBI" id="CHEBI:58359"/>
        <dbReference type="ChEBI" id="CHEBI:58475"/>
        <dbReference type="ChEBI" id="CHEBI:58525"/>
        <dbReference type="EC" id="4.3.2.10"/>
    </reaction>
</comment>
<comment type="catalytic activity">
    <reaction evidence="1">
        <text>L-glutamine + H2O = L-glutamate + NH4(+)</text>
        <dbReference type="Rhea" id="RHEA:15889"/>
        <dbReference type="ChEBI" id="CHEBI:15377"/>
        <dbReference type="ChEBI" id="CHEBI:28938"/>
        <dbReference type="ChEBI" id="CHEBI:29985"/>
        <dbReference type="ChEBI" id="CHEBI:58359"/>
        <dbReference type="EC" id="3.5.1.2"/>
    </reaction>
</comment>
<comment type="pathway">
    <text evidence="1">Amino-acid biosynthesis; L-histidine biosynthesis; L-histidine from 5-phospho-alpha-D-ribose 1-diphosphate: step 5/9.</text>
</comment>
<comment type="subunit">
    <text evidence="1">Heterodimer of HisH and HisF.</text>
</comment>
<comment type="subcellular location">
    <subcellularLocation>
        <location evidence="1">Cytoplasm</location>
    </subcellularLocation>
</comment>
<proteinExistence type="inferred from homology"/>
<sequence length="219" mass="23467">MMATVTVLDYGSGNVRSAVRALERAGAEVTLSAKADDVLNADGLVVPGVGAFATVMKELKSVDALRMIGRRVAGGRPVLAICVGLQILFEAGVEHGNSEPGMGEWPGTVELLPADVVPHMGWNTVQAPADSMLFDGVRDERFYFVHSYGVQHWDFDVTQPKMKPPAVTWSEHGAKFIAAVENGPLCATQFHPEKSDDAGARLLKNWVDSLPATGRNQVA</sequence>